<name>UXUA_SALHS</name>
<feature type="chain" id="PRO_1000094221" description="Mannonate dehydratase">
    <location>
        <begin position="1"/>
        <end position="394"/>
    </location>
</feature>
<protein>
    <recommendedName>
        <fullName evidence="1">Mannonate dehydratase</fullName>
        <ecNumber evidence="1">4.2.1.8</ecNumber>
    </recommendedName>
    <alternativeName>
        <fullName evidence="1">D-mannonate hydro-lyase</fullName>
    </alternativeName>
</protein>
<sequence length="394" mass="44937">MKQTWRWYGPNDPVTLSDVRQAGATGVVTALHHIPNGEIWSVDEIQKRKAIVEEAGLEWSVVESVPIHEDIKTHTGQYDLWIKNYQQTLRNLAQCGIYTVCYNFMPVLDWTRTDLEYVLPDGSKALRFDQIEFAAFELHILKRPGAEADYTAEEIAQAERRFATMSEEDKARLTRNIIAGLPGAEEGYTLDQFRQHLATYKDIDKAKLREHFAYFLKAIIPVADEVGVRMAVHPDDPPRPILGLPRIVSTIEDMQWMVETVNSMANGFTMCTGSYGVRADNDLVDMIKQFGPRIYFTHLRSTLREENPKTFHEAAHLHGDVDMYEVVKAIVEEEHRRKAEGSDDLIPMRPDHGHQMLDDLKKKTNPGYSAIGRLKGLAEVRGVELAIQRAFFSK</sequence>
<accession>B4THM6</accession>
<keyword id="KW-0408">Iron</keyword>
<keyword id="KW-0456">Lyase</keyword>
<keyword id="KW-0464">Manganese</keyword>
<reference key="1">
    <citation type="journal article" date="2011" name="J. Bacteriol.">
        <title>Comparative genomics of 28 Salmonella enterica isolates: evidence for CRISPR-mediated adaptive sublineage evolution.</title>
        <authorList>
            <person name="Fricke W.F."/>
            <person name="Mammel M.K."/>
            <person name="McDermott P.F."/>
            <person name="Tartera C."/>
            <person name="White D.G."/>
            <person name="Leclerc J.E."/>
            <person name="Ravel J."/>
            <person name="Cebula T.A."/>
        </authorList>
    </citation>
    <scope>NUCLEOTIDE SEQUENCE [LARGE SCALE GENOMIC DNA]</scope>
    <source>
        <strain>SL476</strain>
    </source>
</reference>
<gene>
    <name evidence="1" type="primary">uxuA</name>
    <name type="ordered locus">SeHA_C3381</name>
</gene>
<proteinExistence type="inferred from homology"/>
<dbReference type="EC" id="4.2.1.8" evidence="1"/>
<dbReference type="EMBL" id="CP001120">
    <property type="protein sequence ID" value="ACF67821.1"/>
    <property type="molecule type" value="Genomic_DNA"/>
</dbReference>
<dbReference type="RefSeq" id="WP_000815487.1">
    <property type="nucleotide sequence ID" value="NC_011083.1"/>
</dbReference>
<dbReference type="SMR" id="B4THM6"/>
<dbReference type="KEGG" id="seh:SeHA_C3381"/>
<dbReference type="HOGENOM" id="CLU_058621_2_0_6"/>
<dbReference type="UniPathway" id="UPA00246"/>
<dbReference type="Proteomes" id="UP000001866">
    <property type="component" value="Chromosome"/>
</dbReference>
<dbReference type="GO" id="GO:0008198">
    <property type="term" value="F:ferrous iron binding"/>
    <property type="evidence" value="ECO:0007669"/>
    <property type="project" value="TreeGrafter"/>
</dbReference>
<dbReference type="GO" id="GO:0030145">
    <property type="term" value="F:manganese ion binding"/>
    <property type="evidence" value="ECO:0007669"/>
    <property type="project" value="TreeGrafter"/>
</dbReference>
<dbReference type="GO" id="GO:0008927">
    <property type="term" value="F:mannonate dehydratase activity"/>
    <property type="evidence" value="ECO:0007669"/>
    <property type="project" value="UniProtKB-UniRule"/>
</dbReference>
<dbReference type="GO" id="GO:0042840">
    <property type="term" value="P:D-glucuronate catabolic process"/>
    <property type="evidence" value="ECO:0007669"/>
    <property type="project" value="TreeGrafter"/>
</dbReference>
<dbReference type="FunFam" id="3.20.20.150:FF:000004">
    <property type="entry name" value="Mannonate dehydratase"/>
    <property type="match status" value="1"/>
</dbReference>
<dbReference type="FunFam" id="3.20.20.150:FF:000005">
    <property type="entry name" value="Mannonate dehydratase"/>
    <property type="match status" value="1"/>
</dbReference>
<dbReference type="Gene3D" id="3.20.20.150">
    <property type="entry name" value="Divalent-metal-dependent TIM barrel enzymes"/>
    <property type="match status" value="2"/>
</dbReference>
<dbReference type="HAMAP" id="MF_00106">
    <property type="entry name" value="UxuA"/>
    <property type="match status" value="1"/>
</dbReference>
<dbReference type="InterPro" id="IPR004628">
    <property type="entry name" value="Man_deHydtase"/>
</dbReference>
<dbReference type="InterPro" id="IPR036237">
    <property type="entry name" value="Xyl_isomerase-like_sf"/>
</dbReference>
<dbReference type="NCBIfam" id="NF003027">
    <property type="entry name" value="PRK03906.1"/>
    <property type="match status" value="1"/>
</dbReference>
<dbReference type="NCBIfam" id="TIGR00695">
    <property type="entry name" value="uxuA"/>
    <property type="match status" value="1"/>
</dbReference>
<dbReference type="PANTHER" id="PTHR30387">
    <property type="entry name" value="MANNONATE DEHYDRATASE"/>
    <property type="match status" value="1"/>
</dbReference>
<dbReference type="PANTHER" id="PTHR30387:SF2">
    <property type="entry name" value="MANNONATE DEHYDRATASE"/>
    <property type="match status" value="1"/>
</dbReference>
<dbReference type="Pfam" id="PF03786">
    <property type="entry name" value="UxuA"/>
    <property type="match status" value="1"/>
</dbReference>
<dbReference type="PIRSF" id="PIRSF016049">
    <property type="entry name" value="Man_dehyd"/>
    <property type="match status" value="1"/>
</dbReference>
<dbReference type="SUPFAM" id="SSF51658">
    <property type="entry name" value="Xylose isomerase-like"/>
    <property type="match status" value="1"/>
</dbReference>
<organism>
    <name type="scientific">Salmonella heidelberg (strain SL476)</name>
    <dbReference type="NCBI Taxonomy" id="454169"/>
    <lineage>
        <taxon>Bacteria</taxon>
        <taxon>Pseudomonadati</taxon>
        <taxon>Pseudomonadota</taxon>
        <taxon>Gammaproteobacteria</taxon>
        <taxon>Enterobacterales</taxon>
        <taxon>Enterobacteriaceae</taxon>
        <taxon>Salmonella</taxon>
    </lineage>
</organism>
<evidence type="ECO:0000255" key="1">
    <source>
        <dbReference type="HAMAP-Rule" id="MF_00106"/>
    </source>
</evidence>
<comment type="function">
    <text evidence="1">Catalyzes the dehydration of D-mannonate.</text>
</comment>
<comment type="catalytic activity">
    <reaction evidence="1">
        <text>D-mannonate = 2-dehydro-3-deoxy-D-gluconate + H2O</text>
        <dbReference type="Rhea" id="RHEA:20097"/>
        <dbReference type="ChEBI" id="CHEBI:15377"/>
        <dbReference type="ChEBI" id="CHEBI:17767"/>
        <dbReference type="ChEBI" id="CHEBI:57990"/>
        <dbReference type="EC" id="4.2.1.8"/>
    </reaction>
</comment>
<comment type="cofactor">
    <cofactor evidence="1">
        <name>Fe(2+)</name>
        <dbReference type="ChEBI" id="CHEBI:29033"/>
    </cofactor>
    <cofactor evidence="1">
        <name>Mn(2+)</name>
        <dbReference type="ChEBI" id="CHEBI:29035"/>
    </cofactor>
</comment>
<comment type="pathway">
    <text evidence="1">Carbohydrate metabolism; pentose and glucuronate interconversion.</text>
</comment>
<comment type="similarity">
    <text evidence="1">Belongs to the mannonate dehydratase family.</text>
</comment>